<protein>
    <recommendedName>
        <fullName evidence="1">1-deoxy-D-xylulose 5-phosphate reductoisomerase</fullName>
        <shortName evidence="1">DXP reductoisomerase</shortName>
        <ecNumber evidence="1">1.1.1.267</ecNumber>
    </recommendedName>
    <alternativeName>
        <fullName evidence="1">1-deoxyxylulose-5-phosphate reductoisomerase</fullName>
    </alternativeName>
    <alternativeName>
        <fullName evidence="1">2-C-methyl-D-erythritol 4-phosphate synthase</fullName>
    </alternativeName>
</protein>
<keyword id="KW-0414">Isoprene biosynthesis</keyword>
<keyword id="KW-0464">Manganese</keyword>
<keyword id="KW-0479">Metal-binding</keyword>
<keyword id="KW-0521">NADP</keyword>
<keyword id="KW-0560">Oxidoreductase</keyword>
<name>DXR_NITV4</name>
<dbReference type="EC" id="1.1.1.267" evidence="1"/>
<dbReference type="EMBL" id="CP000527">
    <property type="protein sequence ID" value="ABM29132.1"/>
    <property type="molecule type" value="Genomic_DNA"/>
</dbReference>
<dbReference type="RefSeq" id="WP_011792663.1">
    <property type="nucleotide sequence ID" value="NC_008751.1"/>
</dbReference>
<dbReference type="SMR" id="A1VFB6"/>
<dbReference type="KEGG" id="dvl:Dvul_2116"/>
<dbReference type="HOGENOM" id="CLU_035714_0_0_7"/>
<dbReference type="UniPathway" id="UPA00056">
    <property type="reaction ID" value="UER00092"/>
</dbReference>
<dbReference type="Proteomes" id="UP000009173">
    <property type="component" value="Chromosome"/>
</dbReference>
<dbReference type="GO" id="GO:0030604">
    <property type="term" value="F:1-deoxy-D-xylulose-5-phosphate reductoisomerase activity"/>
    <property type="evidence" value="ECO:0007669"/>
    <property type="project" value="UniProtKB-UniRule"/>
</dbReference>
<dbReference type="GO" id="GO:0030145">
    <property type="term" value="F:manganese ion binding"/>
    <property type="evidence" value="ECO:0007669"/>
    <property type="project" value="TreeGrafter"/>
</dbReference>
<dbReference type="GO" id="GO:0070402">
    <property type="term" value="F:NADPH binding"/>
    <property type="evidence" value="ECO:0007669"/>
    <property type="project" value="InterPro"/>
</dbReference>
<dbReference type="GO" id="GO:0051484">
    <property type="term" value="P:isopentenyl diphosphate biosynthetic process, methylerythritol 4-phosphate pathway involved in terpenoid biosynthetic process"/>
    <property type="evidence" value="ECO:0007669"/>
    <property type="project" value="TreeGrafter"/>
</dbReference>
<dbReference type="FunFam" id="3.40.50.720:FF:000045">
    <property type="entry name" value="1-deoxy-D-xylulose 5-phosphate reductoisomerase"/>
    <property type="match status" value="1"/>
</dbReference>
<dbReference type="Gene3D" id="1.10.1740.10">
    <property type="match status" value="1"/>
</dbReference>
<dbReference type="Gene3D" id="3.40.50.720">
    <property type="entry name" value="NAD(P)-binding Rossmann-like Domain"/>
    <property type="match status" value="1"/>
</dbReference>
<dbReference type="HAMAP" id="MF_00183">
    <property type="entry name" value="DXP_reductoisom"/>
    <property type="match status" value="1"/>
</dbReference>
<dbReference type="InterPro" id="IPR003821">
    <property type="entry name" value="DXP_reductoisomerase"/>
</dbReference>
<dbReference type="InterPro" id="IPR013644">
    <property type="entry name" value="DXP_reductoisomerase_C"/>
</dbReference>
<dbReference type="InterPro" id="IPR013512">
    <property type="entry name" value="DXP_reductoisomerase_N"/>
</dbReference>
<dbReference type="InterPro" id="IPR026877">
    <property type="entry name" value="DXPR_C"/>
</dbReference>
<dbReference type="InterPro" id="IPR036169">
    <property type="entry name" value="DXPR_C_sf"/>
</dbReference>
<dbReference type="InterPro" id="IPR036291">
    <property type="entry name" value="NAD(P)-bd_dom_sf"/>
</dbReference>
<dbReference type="NCBIfam" id="TIGR00243">
    <property type="entry name" value="Dxr"/>
    <property type="match status" value="1"/>
</dbReference>
<dbReference type="NCBIfam" id="NF009114">
    <property type="entry name" value="PRK12464.1"/>
    <property type="match status" value="1"/>
</dbReference>
<dbReference type="PANTHER" id="PTHR30525">
    <property type="entry name" value="1-DEOXY-D-XYLULOSE 5-PHOSPHATE REDUCTOISOMERASE"/>
    <property type="match status" value="1"/>
</dbReference>
<dbReference type="PANTHER" id="PTHR30525:SF0">
    <property type="entry name" value="1-DEOXY-D-XYLULOSE 5-PHOSPHATE REDUCTOISOMERASE, CHLOROPLASTIC"/>
    <property type="match status" value="1"/>
</dbReference>
<dbReference type="Pfam" id="PF08436">
    <property type="entry name" value="DXP_redisom_C"/>
    <property type="match status" value="1"/>
</dbReference>
<dbReference type="Pfam" id="PF02670">
    <property type="entry name" value="DXP_reductoisom"/>
    <property type="match status" value="1"/>
</dbReference>
<dbReference type="Pfam" id="PF13288">
    <property type="entry name" value="DXPR_C"/>
    <property type="match status" value="1"/>
</dbReference>
<dbReference type="PIRSF" id="PIRSF006205">
    <property type="entry name" value="Dxp_reductismrs"/>
    <property type="match status" value="1"/>
</dbReference>
<dbReference type="SUPFAM" id="SSF69055">
    <property type="entry name" value="1-deoxy-D-xylulose-5-phosphate reductoisomerase, C-terminal domain"/>
    <property type="match status" value="1"/>
</dbReference>
<dbReference type="SUPFAM" id="SSF55347">
    <property type="entry name" value="Glyceraldehyde-3-phosphate dehydrogenase-like, C-terminal domain"/>
    <property type="match status" value="1"/>
</dbReference>
<dbReference type="SUPFAM" id="SSF51735">
    <property type="entry name" value="NAD(P)-binding Rossmann-fold domains"/>
    <property type="match status" value="1"/>
</dbReference>
<sequence>MIRYISAMPSPEWEHETPRTLALLGSTGSIGTSALRVVEAHPHRFRVVALAGARNVEKLAAQAARWRPEHLGVLDAAGAAKLRDLLPAGYAPHIHIGPEGYATMATLPEAGTVLSAQVGAAGLRATEAAARHGKVICLANKESLVLAGDIIRRHCAGSGAVILPVDSEHNAIFQALQGHDPASVRRIILTASGGPFRGRSREDLAAVSCRDALAHPNWDMGAKITIDSATLMNKGLEVIEACHLYGVGIDDVGVVVHPQSIVHSLVEYEDGSQIAHLGTPDMRIAIAYCLTWPGVVDAGVPRLDLVKAGSLTFEEPDLHSFPCLELARRAYREGRGMPVVLNAANEVAVSLFLSDRIRFLDIPDIIARALDMHDGTTPHDIEGIEALDEATRRTVYERAGHSNTDGMA</sequence>
<accession>A1VFB6</accession>
<evidence type="ECO:0000255" key="1">
    <source>
        <dbReference type="HAMAP-Rule" id="MF_00183"/>
    </source>
</evidence>
<organism>
    <name type="scientific">Nitratidesulfovibrio vulgaris (strain DP4)</name>
    <name type="common">Desulfovibrio vulgaris</name>
    <dbReference type="NCBI Taxonomy" id="391774"/>
    <lineage>
        <taxon>Bacteria</taxon>
        <taxon>Pseudomonadati</taxon>
        <taxon>Thermodesulfobacteriota</taxon>
        <taxon>Desulfovibrionia</taxon>
        <taxon>Desulfovibrionales</taxon>
        <taxon>Desulfovibrionaceae</taxon>
        <taxon>Nitratidesulfovibrio</taxon>
    </lineage>
</organism>
<feature type="chain" id="PRO_1000020257" description="1-deoxy-D-xylulose 5-phosphate reductoisomerase">
    <location>
        <begin position="1"/>
        <end position="408"/>
    </location>
</feature>
<feature type="binding site" evidence="1">
    <location>
        <position position="27"/>
    </location>
    <ligand>
        <name>NADPH</name>
        <dbReference type="ChEBI" id="CHEBI:57783"/>
    </ligand>
</feature>
<feature type="binding site" evidence="1">
    <location>
        <position position="28"/>
    </location>
    <ligand>
        <name>NADPH</name>
        <dbReference type="ChEBI" id="CHEBI:57783"/>
    </ligand>
</feature>
<feature type="binding site" evidence="1">
    <location>
        <position position="29"/>
    </location>
    <ligand>
        <name>NADPH</name>
        <dbReference type="ChEBI" id="CHEBI:57783"/>
    </ligand>
</feature>
<feature type="binding site" evidence="1">
    <location>
        <position position="30"/>
    </location>
    <ligand>
        <name>NADPH</name>
        <dbReference type="ChEBI" id="CHEBI:57783"/>
    </ligand>
</feature>
<feature type="binding site" evidence="1">
    <location>
        <position position="53"/>
    </location>
    <ligand>
        <name>NADPH</name>
        <dbReference type="ChEBI" id="CHEBI:57783"/>
    </ligand>
</feature>
<feature type="binding site" evidence="1">
    <location>
        <position position="54"/>
    </location>
    <ligand>
        <name>NADPH</name>
        <dbReference type="ChEBI" id="CHEBI:57783"/>
    </ligand>
</feature>
<feature type="binding site" evidence="1">
    <location>
        <position position="55"/>
    </location>
    <ligand>
        <name>NADPH</name>
        <dbReference type="ChEBI" id="CHEBI:57783"/>
    </ligand>
</feature>
<feature type="binding site" evidence="1">
    <location>
        <position position="140"/>
    </location>
    <ligand>
        <name>NADPH</name>
        <dbReference type="ChEBI" id="CHEBI:57783"/>
    </ligand>
</feature>
<feature type="binding site" evidence="1">
    <location>
        <position position="141"/>
    </location>
    <ligand>
        <name>1-deoxy-D-xylulose 5-phosphate</name>
        <dbReference type="ChEBI" id="CHEBI:57792"/>
    </ligand>
</feature>
<feature type="binding site" evidence="1">
    <location>
        <position position="142"/>
    </location>
    <ligand>
        <name>NADPH</name>
        <dbReference type="ChEBI" id="CHEBI:57783"/>
    </ligand>
</feature>
<feature type="binding site" evidence="1">
    <location>
        <position position="166"/>
    </location>
    <ligand>
        <name>Mn(2+)</name>
        <dbReference type="ChEBI" id="CHEBI:29035"/>
    </ligand>
</feature>
<feature type="binding site" evidence="1">
    <location>
        <position position="167"/>
    </location>
    <ligand>
        <name>1-deoxy-D-xylulose 5-phosphate</name>
        <dbReference type="ChEBI" id="CHEBI:57792"/>
    </ligand>
</feature>
<feature type="binding site" evidence="1">
    <location>
        <position position="168"/>
    </location>
    <ligand>
        <name>1-deoxy-D-xylulose 5-phosphate</name>
        <dbReference type="ChEBI" id="CHEBI:57792"/>
    </ligand>
</feature>
<feature type="binding site" evidence="1">
    <location>
        <position position="168"/>
    </location>
    <ligand>
        <name>Mn(2+)</name>
        <dbReference type="ChEBI" id="CHEBI:29035"/>
    </ligand>
</feature>
<feature type="binding site" evidence="1">
    <location>
        <position position="192"/>
    </location>
    <ligand>
        <name>1-deoxy-D-xylulose 5-phosphate</name>
        <dbReference type="ChEBI" id="CHEBI:57792"/>
    </ligand>
</feature>
<feature type="binding site" evidence="1">
    <location>
        <position position="215"/>
    </location>
    <ligand>
        <name>1-deoxy-D-xylulose 5-phosphate</name>
        <dbReference type="ChEBI" id="CHEBI:57792"/>
    </ligand>
</feature>
<feature type="binding site" evidence="1">
    <location>
        <position position="221"/>
    </location>
    <ligand>
        <name>NADPH</name>
        <dbReference type="ChEBI" id="CHEBI:57783"/>
    </ligand>
</feature>
<feature type="binding site" evidence="1">
    <location>
        <position position="228"/>
    </location>
    <ligand>
        <name>1-deoxy-D-xylulose 5-phosphate</name>
        <dbReference type="ChEBI" id="CHEBI:57792"/>
    </ligand>
</feature>
<feature type="binding site" evidence="1">
    <location>
        <position position="233"/>
    </location>
    <ligand>
        <name>1-deoxy-D-xylulose 5-phosphate</name>
        <dbReference type="ChEBI" id="CHEBI:57792"/>
    </ligand>
</feature>
<feature type="binding site" evidence="1">
    <location>
        <position position="234"/>
    </location>
    <ligand>
        <name>1-deoxy-D-xylulose 5-phosphate</name>
        <dbReference type="ChEBI" id="CHEBI:57792"/>
    </ligand>
</feature>
<feature type="binding site" evidence="1">
    <location>
        <position position="237"/>
    </location>
    <ligand>
        <name>1-deoxy-D-xylulose 5-phosphate</name>
        <dbReference type="ChEBI" id="CHEBI:57792"/>
    </ligand>
</feature>
<feature type="binding site" evidence="1">
    <location>
        <position position="237"/>
    </location>
    <ligand>
        <name>Mn(2+)</name>
        <dbReference type="ChEBI" id="CHEBI:29035"/>
    </ligand>
</feature>
<reference key="1">
    <citation type="journal article" date="2009" name="Environ. Microbiol.">
        <title>Contribution of mobile genetic elements to Desulfovibrio vulgaris genome plasticity.</title>
        <authorList>
            <person name="Walker C.B."/>
            <person name="Stolyar S."/>
            <person name="Chivian D."/>
            <person name="Pinel N."/>
            <person name="Gabster J.A."/>
            <person name="Dehal P.S."/>
            <person name="He Z."/>
            <person name="Yang Z.K."/>
            <person name="Yen H.C."/>
            <person name="Zhou J."/>
            <person name="Wall J.D."/>
            <person name="Hazen T.C."/>
            <person name="Arkin A.P."/>
            <person name="Stahl D.A."/>
        </authorList>
    </citation>
    <scope>NUCLEOTIDE SEQUENCE [LARGE SCALE GENOMIC DNA]</scope>
    <source>
        <strain>DP4</strain>
    </source>
</reference>
<proteinExistence type="inferred from homology"/>
<gene>
    <name evidence="1" type="primary">dxr</name>
    <name type="ordered locus">Dvul_2116</name>
</gene>
<comment type="function">
    <text evidence="1">Catalyzes the NADPH-dependent rearrangement and reduction of 1-deoxy-D-xylulose-5-phosphate (DXP) to 2-C-methyl-D-erythritol 4-phosphate (MEP).</text>
</comment>
<comment type="catalytic activity">
    <reaction evidence="1">
        <text>2-C-methyl-D-erythritol 4-phosphate + NADP(+) = 1-deoxy-D-xylulose 5-phosphate + NADPH + H(+)</text>
        <dbReference type="Rhea" id="RHEA:13717"/>
        <dbReference type="ChEBI" id="CHEBI:15378"/>
        <dbReference type="ChEBI" id="CHEBI:57783"/>
        <dbReference type="ChEBI" id="CHEBI:57792"/>
        <dbReference type="ChEBI" id="CHEBI:58262"/>
        <dbReference type="ChEBI" id="CHEBI:58349"/>
        <dbReference type="EC" id="1.1.1.267"/>
    </reaction>
    <physiologicalReaction direction="right-to-left" evidence="1">
        <dbReference type="Rhea" id="RHEA:13719"/>
    </physiologicalReaction>
</comment>
<comment type="cofactor">
    <cofactor evidence="1">
        <name>Mg(2+)</name>
        <dbReference type="ChEBI" id="CHEBI:18420"/>
    </cofactor>
    <cofactor evidence="1">
        <name>Mn(2+)</name>
        <dbReference type="ChEBI" id="CHEBI:29035"/>
    </cofactor>
</comment>
<comment type="pathway">
    <text evidence="1">Isoprenoid biosynthesis; isopentenyl diphosphate biosynthesis via DXP pathway; isopentenyl diphosphate from 1-deoxy-D-xylulose 5-phosphate: step 1/6.</text>
</comment>
<comment type="similarity">
    <text evidence="1">Belongs to the DXR family.</text>
</comment>